<reference key="1">
    <citation type="journal article" date="2002" name="Proc. Natl. Acad. Sci. U.S.A.">
        <title>Genome sequence of the hyperthermophilic crenarchaeon Pyrobaculum aerophilum.</title>
        <authorList>
            <person name="Fitz-Gibbon S.T."/>
            <person name="Ladner H."/>
            <person name="Kim U.-J."/>
            <person name="Stetter K.O."/>
            <person name="Simon M.I."/>
            <person name="Miller J.H."/>
        </authorList>
    </citation>
    <scope>NUCLEOTIDE SEQUENCE [LARGE SCALE GENOMIC DNA]</scope>
    <source>
        <strain>ATCC 51768 / DSM 7523 / JCM 9630 / CIP 104966 / NBRC 100827 / IM2</strain>
    </source>
</reference>
<feature type="chain" id="PRO_0000062905" description="Probable octanoyltransferase">
    <location>
        <begin position="1"/>
        <end position="224"/>
    </location>
</feature>
<feature type="domain" description="BPL/LPL catalytic" evidence="2">
    <location>
        <begin position="28"/>
        <end position="199"/>
    </location>
</feature>
<feature type="active site" description="Acyl-thioester intermediate" evidence="1">
    <location>
        <position position="161"/>
    </location>
</feature>
<feature type="binding site" evidence="1">
    <location>
        <begin position="66"/>
        <end position="73"/>
    </location>
    <ligand>
        <name>substrate</name>
    </ligand>
</feature>
<feature type="binding site" evidence="1">
    <location>
        <begin position="130"/>
        <end position="132"/>
    </location>
    <ligand>
        <name>substrate</name>
    </ligand>
</feature>
<feature type="binding site" evidence="1">
    <location>
        <begin position="143"/>
        <end position="145"/>
    </location>
    <ligand>
        <name>substrate</name>
    </ligand>
</feature>
<feature type="site" description="Lowers pKa of active site Cys" evidence="1">
    <location>
        <position position="127"/>
    </location>
</feature>
<sequence>MKILWIGRTQYAEAWRLMKSLHCAVAQGLTGDIALVTEHEPVVTVGKHGRLNNVIKWDVPVYLVERGGDATYHGPGQAVVYPIVALRWPLKRYIDAIEDAVIKTLGTYGILAGKKQGHRGVWVGDRKIASIGIAVENNVAYHGVAINVTIDPREFARINPCGLPASTMISMKELGVVAEVRDVGIETAKKLALELGLTPELISKPPEVPQVAEELKPVRVAINA</sequence>
<keyword id="KW-0012">Acyltransferase</keyword>
<keyword id="KW-0963">Cytoplasm</keyword>
<keyword id="KW-1185">Reference proteome</keyword>
<keyword id="KW-0808">Transferase</keyword>
<accession>Q8ZUR4</accession>
<protein>
    <recommendedName>
        <fullName evidence="1">Probable octanoyltransferase</fullName>
        <ecNumber evidence="1">2.3.1.181</ecNumber>
    </recommendedName>
    <alternativeName>
        <fullName evidence="1">Lipoate-protein ligase B</fullName>
    </alternativeName>
    <alternativeName>
        <fullName evidence="1">Lipoyl/octanoyl transferase</fullName>
    </alternativeName>
    <alternativeName>
        <fullName evidence="1">Octanoyl-[acyl-carrier-protein]-protein N-octanoyltransferase</fullName>
    </alternativeName>
</protein>
<comment type="function">
    <text evidence="1">Catalyzes the transfer of endogenously produced octanoic acid from octanoyl-acyl-carrier-protein onto the lipoyl domains of lipoate-dependent enzymes. Lipoyl-ACP can also act as a substrate although octanoyl-ACP is likely to be the physiological substrate.</text>
</comment>
<comment type="catalytic activity">
    <reaction evidence="1">
        <text>octanoyl-[ACP] + L-lysyl-[protein] = N(6)-octanoyl-L-lysyl-[protein] + holo-[ACP] + H(+)</text>
        <dbReference type="Rhea" id="RHEA:17665"/>
        <dbReference type="Rhea" id="RHEA-COMP:9636"/>
        <dbReference type="Rhea" id="RHEA-COMP:9685"/>
        <dbReference type="Rhea" id="RHEA-COMP:9752"/>
        <dbReference type="Rhea" id="RHEA-COMP:9928"/>
        <dbReference type="ChEBI" id="CHEBI:15378"/>
        <dbReference type="ChEBI" id="CHEBI:29969"/>
        <dbReference type="ChEBI" id="CHEBI:64479"/>
        <dbReference type="ChEBI" id="CHEBI:78463"/>
        <dbReference type="ChEBI" id="CHEBI:78809"/>
        <dbReference type="EC" id="2.3.1.181"/>
    </reaction>
</comment>
<comment type="pathway">
    <text evidence="1">Protein modification; protein lipoylation via endogenous pathway; protein N(6)-(lipoyl)lysine from octanoyl-[acyl-carrier-protein]: step 1/2.</text>
</comment>
<comment type="subcellular location">
    <subcellularLocation>
        <location evidence="1">Cytoplasm</location>
    </subcellularLocation>
</comment>
<comment type="miscellaneous">
    <text evidence="1">In the reaction, the free carboxyl group of octanoic acid is attached via an amide linkage to the epsilon-amino group of a specific lysine residue of lipoyl domains of lipoate-dependent enzymes.</text>
</comment>
<comment type="similarity">
    <text evidence="1">Belongs to the LipB family.</text>
</comment>
<dbReference type="EC" id="2.3.1.181" evidence="1"/>
<dbReference type="EMBL" id="AE009441">
    <property type="protein sequence ID" value="AAL64342.1"/>
    <property type="molecule type" value="Genomic_DNA"/>
</dbReference>
<dbReference type="RefSeq" id="WP_011008810.1">
    <property type="nucleotide sequence ID" value="NC_003364.1"/>
</dbReference>
<dbReference type="SMR" id="Q8ZUR4"/>
<dbReference type="STRING" id="178306.PAE2651"/>
<dbReference type="EnsemblBacteria" id="AAL64342">
    <property type="protein sequence ID" value="AAL64342"/>
    <property type="gene ID" value="PAE2651"/>
</dbReference>
<dbReference type="GeneID" id="1464683"/>
<dbReference type="KEGG" id="pai:PAE2651"/>
<dbReference type="PATRIC" id="fig|178306.9.peg.1974"/>
<dbReference type="eggNOG" id="arCOG01942">
    <property type="taxonomic scope" value="Archaea"/>
</dbReference>
<dbReference type="HOGENOM" id="CLU_035168_3_1_2"/>
<dbReference type="InParanoid" id="Q8ZUR4"/>
<dbReference type="UniPathway" id="UPA00538">
    <property type="reaction ID" value="UER00592"/>
</dbReference>
<dbReference type="Proteomes" id="UP000002439">
    <property type="component" value="Chromosome"/>
</dbReference>
<dbReference type="GO" id="GO:0005737">
    <property type="term" value="C:cytoplasm"/>
    <property type="evidence" value="ECO:0007669"/>
    <property type="project" value="UniProtKB-SubCell"/>
</dbReference>
<dbReference type="GO" id="GO:0033819">
    <property type="term" value="F:lipoyl(octanoyl) transferase activity"/>
    <property type="evidence" value="ECO:0000318"/>
    <property type="project" value="GO_Central"/>
</dbReference>
<dbReference type="GO" id="GO:0036211">
    <property type="term" value="P:protein modification process"/>
    <property type="evidence" value="ECO:0007669"/>
    <property type="project" value="InterPro"/>
</dbReference>
<dbReference type="CDD" id="cd16444">
    <property type="entry name" value="LipB"/>
    <property type="match status" value="1"/>
</dbReference>
<dbReference type="FunFam" id="3.30.930.10:FF:000189">
    <property type="entry name" value="Octanoyltransferase"/>
    <property type="match status" value="1"/>
</dbReference>
<dbReference type="Gene3D" id="3.30.930.10">
    <property type="entry name" value="Bira Bifunctional Protein, Domain 2"/>
    <property type="match status" value="1"/>
</dbReference>
<dbReference type="HAMAP" id="MF_00013">
    <property type="entry name" value="LipB"/>
    <property type="match status" value="1"/>
</dbReference>
<dbReference type="InterPro" id="IPR045864">
    <property type="entry name" value="aa-tRNA-synth_II/BPL/LPL"/>
</dbReference>
<dbReference type="InterPro" id="IPR004143">
    <property type="entry name" value="BPL_LPL_catalytic"/>
</dbReference>
<dbReference type="InterPro" id="IPR000544">
    <property type="entry name" value="Octanoyltransferase"/>
</dbReference>
<dbReference type="InterPro" id="IPR020605">
    <property type="entry name" value="Octanoyltransferase_CS"/>
</dbReference>
<dbReference type="NCBIfam" id="TIGR00214">
    <property type="entry name" value="lipB"/>
    <property type="match status" value="1"/>
</dbReference>
<dbReference type="PANTHER" id="PTHR10993:SF7">
    <property type="entry name" value="LIPOYLTRANSFERASE 2, MITOCHONDRIAL-RELATED"/>
    <property type="match status" value="1"/>
</dbReference>
<dbReference type="PANTHER" id="PTHR10993">
    <property type="entry name" value="OCTANOYLTRANSFERASE"/>
    <property type="match status" value="1"/>
</dbReference>
<dbReference type="Pfam" id="PF21948">
    <property type="entry name" value="LplA-B_cat"/>
    <property type="match status" value="1"/>
</dbReference>
<dbReference type="PIRSF" id="PIRSF016262">
    <property type="entry name" value="LPLase"/>
    <property type="match status" value="1"/>
</dbReference>
<dbReference type="SUPFAM" id="SSF55681">
    <property type="entry name" value="Class II aaRS and biotin synthetases"/>
    <property type="match status" value="1"/>
</dbReference>
<dbReference type="PROSITE" id="PS51733">
    <property type="entry name" value="BPL_LPL_CATALYTIC"/>
    <property type="match status" value="1"/>
</dbReference>
<dbReference type="PROSITE" id="PS01313">
    <property type="entry name" value="LIPB"/>
    <property type="match status" value="1"/>
</dbReference>
<organism>
    <name type="scientific">Pyrobaculum aerophilum (strain ATCC 51768 / DSM 7523 / JCM 9630 / CIP 104966 / NBRC 100827 / IM2)</name>
    <dbReference type="NCBI Taxonomy" id="178306"/>
    <lineage>
        <taxon>Archaea</taxon>
        <taxon>Thermoproteota</taxon>
        <taxon>Thermoprotei</taxon>
        <taxon>Thermoproteales</taxon>
        <taxon>Thermoproteaceae</taxon>
        <taxon>Pyrobaculum</taxon>
    </lineage>
</organism>
<name>LIPB_PYRAE</name>
<evidence type="ECO:0000255" key="1">
    <source>
        <dbReference type="HAMAP-Rule" id="MF_00013"/>
    </source>
</evidence>
<evidence type="ECO:0000255" key="2">
    <source>
        <dbReference type="PROSITE-ProRule" id="PRU01067"/>
    </source>
</evidence>
<gene>
    <name evidence="1" type="primary">lipB</name>
    <name type="ordered locus">PAE2651</name>
</gene>
<proteinExistence type="inferred from homology"/>